<reference key="1">
    <citation type="journal article" date="2005" name="Mol. Genet. Genomics">
        <title>A fine physical map of the rice chromosome 5.</title>
        <authorList>
            <person name="Cheng C.-H."/>
            <person name="Chung M.C."/>
            <person name="Liu S.-M."/>
            <person name="Chen S.-K."/>
            <person name="Kao F.Y."/>
            <person name="Lin S.-J."/>
            <person name="Hsiao S.-H."/>
            <person name="Tseng I.C."/>
            <person name="Hsing Y.-I.C."/>
            <person name="Wu H.-P."/>
            <person name="Chen C.-S."/>
            <person name="Shaw J.-F."/>
            <person name="Wu J."/>
            <person name="Matsumoto T."/>
            <person name="Sasaki T."/>
            <person name="Chen H.-C."/>
            <person name="Chow T.-Y."/>
        </authorList>
    </citation>
    <scope>NUCLEOTIDE SEQUENCE [LARGE SCALE GENOMIC DNA]</scope>
    <source>
        <strain>cv. Nipponbare</strain>
    </source>
</reference>
<reference key="2">
    <citation type="journal article" date="2005" name="Nature">
        <title>The map-based sequence of the rice genome.</title>
        <authorList>
            <consortium name="International rice genome sequencing project (IRGSP)"/>
        </authorList>
    </citation>
    <scope>NUCLEOTIDE SEQUENCE [LARGE SCALE GENOMIC DNA]</scope>
    <source>
        <strain>cv. Nipponbare</strain>
    </source>
</reference>
<reference key="3">
    <citation type="journal article" date="2008" name="Nucleic Acids Res.">
        <title>The rice annotation project database (RAP-DB): 2008 update.</title>
        <authorList>
            <consortium name="The rice annotation project (RAP)"/>
        </authorList>
    </citation>
    <scope>GENOME REANNOTATION</scope>
    <source>
        <strain>cv. Nipponbare</strain>
    </source>
</reference>
<reference key="4">
    <citation type="journal article" date="2013" name="Rice">
        <title>Improvement of the Oryza sativa Nipponbare reference genome using next generation sequence and optical map data.</title>
        <authorList>
            <person name="Kawahara Y."/>
            <person name="de la Bastide M."/>
            <person name="Hamilton J.P."/>
            <person name="Kanamori H."/>
            <person name="McCombie W.R."/>
            <person name="Ouyang S."/>
            <person name="Schwartz D.C."/>
            <person name="Tanaka T."/>
            <person name="Wu J."/>
            <person name="Zhou S."/>
            <person name="Childs K.L."/>
            <person name="Davidson R.M."/>
            <person name="Lin H."/>
            <person name="Quesada-Ocampo L."/>
            <person name="Vaillancourt B."/>
            <person name="Sakai H."/>
            <person name="Lee S.S."/>
            <person name="Kim J."/>
            <person name="Numa H."/>
            <person name="Itoh T."/>
            <person name="Buell C.R."/>
            <person name="Matsumoto T."/>
        </authorList>
    </citation>
    <scope>GENOME REANNOTATION</scope>
    <source>
        <strain>cv. Nipponbare</strain>
    </source>
</reference>
<reference key="5">
    <citation type="journal article" date="2003" name="Science">
        <title>Collection, mapping, and annotation of over 28,000 cDNA clones from japonica rice.</title>
        <authorList>
            <consortium name="The rice full-length cDNA consortium"/>
        </authorList>
    </citation>
    <scope>NUCLEOTIDE SEQUENCE [LARGE SCALE MRNA] OF 153-356</scope>
    <source>
        <strain>cv. Nipponbare</strain>
    </source>
</reference>
<reference key="6">
    <citation type="journal article" date="2006" name="Mol. Genet. Genomics">
        <title>Genome-wide analysis of cyclin family in rice (Oryza sativa L.).</title>
        <authorList>
            <person name="La H."/>
            <person name="Li J."/>
            <person name="Ji Z."/>
            <person name="Cheng Y."/>
            <person name="Li X."/>
            <person name="Jiang S."/>
            <person name="Venkatesh P.N."/>
            <person name="Ramachandran S."/>
        </authorList>
    </citation>
    <scope>GENE FAMILY</scope>
    <scope>NOMENCLATURE</scope>
</reference>
<accession>Q0DJR9</accession>
<accession>Q6F346</accession>
<name>CCA14_ORYSJ</name>
<organism>
    <name type="scientific">Oryza sativa subsp. japonica</name>
    <name type="common">Rice</name>
    <dbReference type="NCBI Taxonomy" id="39947"/>
    <lineage>
        <taxon>Eukaryota</taxon>
        <taxon>Viridiplantae</taxon>
        <taxon>Streptophyta</taxon>
        <taxon>Embryophyta</taxon>
        <taxon>Tracheophyta</taxon>
        <taxon>Spermatophyta</taxon>
        <taxon>Magnoliopsida</taxon>
        <taxon>Liliopsida</taxon>
        <taxon>Poales</taxon>
        <taxon>Poaceae</taxon>
        <taxon>BOP clade</taxon>
        <taxon>Oryzoideae</taxon>
        <taxon>Oryzeae</taxon>
        <taxon>Oryzinae</taxon>
        <taxon>Oryza</taxon>
        <taxon>Oryza sativa</taxon>
    </lineage>
</organism>
<feature type="chain" id="PRO_0000286992" description="Cyclin-A1-4">
    <location>
        <begin position="1"/>
        <end position="356"/>
    </location>
</feature>
<evidence type="ECO:0000305" key="1"/>
<sequence length="356" mass="40580">MSKEDAMSTGDSTESLDIDCLDDGDSEVVSSLQHLADDKLHISDNRDVAGVASKWTKHGCNSVEIDYIVDIDNNHEDPQLCATLAFDIYKHLRVAETKKRPSTDFVETIQKNIDTSMRAVLIDWLVEVTEEYRLVPETLYLTVNYIDRYLSSKVINRRKMQLLGVACLLIASKYEEICPPQVEELCYISDNTYTKDEVLKMEASVLKYLKFEMTAPTTKCFLRRFLRAAQVCHEAPVLHLEFLANYIAELSLLEYSLICYVPSLIAASSIFLAKFILKPTENPWNSTLSFYTQYKPSDLCNCAKGLHRLFLVGPGGNLRAVREKYSQHKYKFVAKKYSPPSIPAEFFEDPSSYKPD</sequence>
<comment type="similarity">
    <text evidence="1">Belongs to the cyclin family. Cyclin AB subfamily.</text>
</comment>
<comment type="sequence caution" evidence="1">
    <conflict type="erroneous gene model prediction">
        <sequence resource="EMBL-CDS" id="AAT73638"/>
    </conflict>
</comment>
<comment type="sequence caution" evidence="1">
    <conflict type="erroneous gene model prediction">
        <sequence resource="EMBL-CDS" id="BAF16904"/>
    </conflict>
</comment>
<protein>
    <recommendedName>
        <fullName>Cyclin-A1-4</fullName>
    </recommendedName>
    <alternativeName>
        <fullName>G2/mitotic-specific cyclin-A1-4</fullName>
        <shortName>CycA1;4</shortName>
    </alternativeName>
</protein>
<proteinExistence type="evidence at transcript level"/>
<dbReference type="EMBL" id="AC118286">
    <property type="protein sequence ID" value="AAT73638.1"/>
    <property type="status" value="ALT_SEQ"/>
    <property type="molecule type" value="Genomic_DNA"/>
</dbReference>
<dbReference type="EMBL" id="AP008211">
    <property type="protein sequence ID" value="BAF16904.1"/>
    <property type="status" value="ALT_SEQ"/>
    <property type="molecule type" value="Genomic_DNA"/>
</dbReference>
<dbReference type="EMBL" id="AP014961">
    <property type="status" value="NOT_ANNOTATED_CDS"/>
    <property type="molecule type" value="Genomic_DNA"/>
</dbReference>
<dbReference type="EMBL" id="AK103430">
    <property type="status" value="NOT_ANNOTATED_CDS"/>
    <property type="molecule type" value="mRNA"/>
</dbReference>
<dbReference type="RefSeq" id="XP_015637619.1">
    <property type="nucleotide sequence ID" value="XM_015782133.1"/>
</dbReference>
<dbReference type="SMR" id="Q0DJR9"/>
<dbReference type="FunCoup" id="Q0DJR9">
    <property type="interactions" value="517"/>
</dbReference>
<dbReference type="STRING" id="39947.Q0DJR9"/>
<dbReference type="PaxDb" id="39947-Q0DJR9"/>
<dbReference type="KEGG" id="dosa:Os05g0237100"/>
<dbReference type="eggNOG" id="KOG0654">
    <property type="taxonomic scope" value="Eukaryota"/>
</dbReference>
<dbReference type="InParanoid" id="Q0DJR9"/>
<dbReference type="OrthoDB" id="5590282at2759"/>
<dbReference type="Proteomes" id="UP000000763">
    <property type="component" value="Chromosome 5"/>
</dbReference>
<dbReference type="Proteomes" id="UP000059680">
    <property type="component" value="Chromosome 5"/>
</dbReference>
<dbReference type="GO" id="GO:0000307">
    <property type="term" value="C:cyclin-dependent protein kinase holoenzyme complex"/>
    <property type="evidence" value="ECO:0000318"/>
    <property type="project" value="GO_Central"/>
</dbReference>
<dbReference type="GO" id="GO:0005737">
    <property type="term" value="C:cytoplasm"/>
    <property type="evidence" value="ECO:0000318"/>
    <property type="project" value="GO_Central"/>
</dbReference>
<dbReference type="GO" id="GO:0005634">
    <property type="term" value="C:nucleus"/>
    <property type="evidence" value="ECO:0000318"/>
    <property type="project" value="GO_Central"/>
</dbReference>
<dbReference type="GO" id="GO:0016538">
    <property type="term" value="F:cyclin-dependent protein serine/threonine kinase regulator activity"/>
    <property type="evidence" value="ECO:0000318"/>
    <property type="project" value="GO_Central"/>
</dbReference>
<dbReference type="GO" id="GO:0051301">
    <property type="term" value="P:cell division"/>
    <property type="evidence" value="ECO:0007669"/>
    <property type="project" value="UniProtKB-KW"/>
</dbReference>
<dbReference type="GO" id="GO:0000082">
    <property type="term" value="P:G1/S transition of mitotic cell cycle"/>
    <property type="evidence" value="ECO:0000318"/>
    <property type="project" value="GO_Central"/>
</dbReference>
<dbReference type="CDD" id="cd20506">
    <property type="entry name" value="CYCLIN_AtCycA-like_rpt2"/>
    <property type="match status" value="1"/>
</dbReference>
<dbReference type="FunFam" id="1.10.472.10:FF:000013">
    <property type="entry name" value="Cyclin A1"/>
    <property type="match status" value="1"/>
</dbReference>
<dbReference type="FunFam" id="1.10.472.10:FF:000167">
    <property type="entry name" value="Mitotic cyclin 6"/>
    <property type="match status" value="1"/>
</dbReference>
<dbReference type="Gene3D" id="1.10.472.10">
    <property type="entry name" value="Cyclin-like"/>
    <property type="match status" value="2"/>
</dbReference>
<dbReference type="InterPro" id="IPR039361">
    <property type="entry name" value="Cyclin"/>
</dbReference>
<dbReference type="InterPro" id="IPR013763">
    <property type="entry name" value="Cyclin-like_dom"/>
</dbReference>
<dbReference type="InterPro" id="IPR036915">
    <property type="entry name" value="Cyclin-like_sf"/>
</dbReference>
<dbReference type="InterPro" id="IPR004367">
    <property type="entry name" value="Cyclin_C-dom"/>
</dbReference>
<dbReference type="InterPro" id="IPR006671">
    <property type="entry name" value="Cyclin_N"/>
</dbReference>
<dbReference type="InterPro" id="IPR048258">
    <property type="entry name" value="Cyclins_cyclin-box"/>
</dbReference>
<dbReference type="PANTHER" id="PTHR10177">
    <property type="entry name" value="CYCLINS"/>
    <property type="match status" value="1"/>
</dbReference>
<dbReference type="Pfam" id="PF02984">
    <property type="entry name" value="Cyclin_C"/>
    <property type="match status" value="1"/>
</dbReference>
<dbReference type="Pfam" id="PF00134">
    <property type="entry name" value="Cyclin_N"/>
    <property type="match status" value="1"/>
</dbReference>
<dbReference type="SMART" id="SM00385">
    <property type="entry name" value="CYCLIN"/>
    <property type="match status" value="2"/>
</dbReference>
<dbReference type="SMART" id="SM01332">
    <property type="entry name" value="Cyclin_C"/>
    <property type="match status" value="1"/>
</dbReference>
<dbReference type="SUPFAM" id="SSF47954">
    <property type="entry name" value="Cyclin-like"/>
    <property type="match status" value="2"/>
</dbReference>
<dbReference type="PROSITE" id="PS00292">
    <property type="entry name" value="CYCLINS"/>
    <property type="match status" value="1"/>
</dbReference>
<gene>
    <name type="primary">CYCA1-4</name>
    <name type="ordered locus">Os05g0237100</name>
    <name type="ordered locus">LOC_Os05g14730</name>
    <name type="ORF">OJ1384_A02.11</name>
</gene>
<keyword id="KW-0131">Cell cycle</keyword>
<keyword id="KW-0132">Cell division</keyword>
<keyword id="KW-0195">Cyclin</keyword>
<keyword id="KW-1185">Reference proteome</keyword>